<organism>
    <name type="scientific">Clostridioides difficile (strain 630)</name>
    <name type="common">Peptoclostridium difficile</name>
    <dbReference type="NCBI Taxonomy" id="272563"/>
    <lineage>
        <taxon>Bacteria</taxon>
        <taxon>Bacillati</taxon>
        <taxon>Bacillota</taxon>
        <taxon>Clostridia</taxon>
        <taxon>Peptostreptococcales</taxon>
        <taxon>Peptostreptococcaceae</taxon>
        <taxon>Clostridioides</taxon>
    </lineage>
</organism>
<protein>
    <recommendedName>
        <fullName evidence="1">Ethanolamine ammonia-lyase small subunit</fullName>
        <shortName evidence="1">EAL small subunit</shortName>
        <ecNumber evidence="1">4.3.1.7</ecNumber>
    </recommendedName>
</protein>
<accession>Q187M6</accession>
<reference key="1">
    <citation type="journal article" date="2006" name="Nat. Genet.">
        <title>The multidrug-resistant human pathogen Clostridium difficile has a highly mobile, mosaic genome.</title>
        <authorList>
            <person name="Sebaihia M."/>
            <person name="Wren B.W."/>
            <person name="Mullany P."/>
            <person name="Fairweather N.F."/>
            <person name="Minton N."/>
            <person name="Stabler R."/>
            <person name="Thomson N.R."/>
            <person name="Roberts A.P."/>
            <person name="Cerdeno-Tarraga A.M."/>
            <person name="Wang H."/>
            <person name="Holden M.T.G."/>
            <person name="Wright A."/>
            <person name="Churcher C."/>
            <person name="Quail M.A."/>
            <person name="Baker S."/>
            <person name="Bason N."/>
            <person name="Brooks K."/>
            <person name="Chillingworth T."/>
            <person name="Cronin A."/>
            <person name="Davis P."/>
            <person name="Dowd L."/>
            <person name="Fraser A."/>
            <person name="Feltwell T."/>
            <person name="Hance Z."/>
            <person name="Holroyd S."/>
            <person name="Jagels K."/>
            <person name="Moule S."/>
            <person name="Mungall K."/>
            <person name="Price C."/>
            <person name="Rabbinowitsch E."/>
            <person name="Sharp S."/>
            <person name="Simmonds M."/>
            <person name="Stevens K."/>
            <person name="Unwin L."/>
            <person name="Whithead S."/>
            <person name="Dupuy B."/>
            <person name="Dougan G."/>
            <person name="Barrell B."/>
            <person name="Parkhill J."/>
        </authorList>
    </citation>
    <scope>NUCLEOTIDE SEQUENCE [LARGE SCALE GENOMIC DNA]</scope>
    <source>
        <strain>630</strain>
    </source>
</reference>
<dbReference type="EC" id="4.3.1.7" evidence="1"/>
<dbReference type="EMBL" id="AM180355">
    <property type="protein sequence ID" value="CAJ68790.1"/>
    <property type="molecule type" value="Genomic_DNA"/>
</dbReference>
<dbReference type="RefSeq" id="WP_009897052.1">
    <property type="nucleotide sequence ID" value="NZ_JAUPES010000023.1"/>
</dbReference>
<dbReference type="RefSeq" id="YP_001088421.1">
    <property type="nucleotide sequence ID" value="NC_009089.1"/>
</dbReference>
<dbReference type="SMR" id="Q187M6"/>
<dbReference type="STRING" id="272563.CD630_19140"/>
<dbReference type="EnsemblBacteria" id="CAJ68790">
    <property type="protein sequence ID" value="CAJ68790"/>
    <property type="gene ID" value="CD630_19140"/>
</dbReference>
<dbReference type="GeneID" id="66354295"/>
<dbReference type="KEGG" id="cdf:CD630_19140"/>
<dbReference type="KEGG" id="pdc:CDIF630_02118"/>
<dbReference type="PATRIC" id="fig|272563.120.peg.2010"/>
<dbReference type="eggNOG" id="COG4302">
    <property type="taxonomic scope" value="Bacteria"/>
</dbReference>
<dbReference type="OrthoDB" id="114248at2"/>
<dbReference type="PhylomeDB" id="Q187M6"/>
<dbReference type="BioCyc" id="PDIF272563:G12WB-2058-MONOMER"/>
<dbReference type="UniPathway" id="UPA00560"/>
<dbReference type="Proteomes" id="UP000001978">
    <property type="component" value="Chromosome"/>
</dbReference>
<dbReference type="GO" id="GO:0009350">
    <property type="term" value="C:ethanolamine ammonia-lyase complex"/>
    <property type="evidence" value="ECO:0007669"/>
    <property type="project" value="UniProtKB-UniRule"/>
</dbReference>
<dbReference type="GO" id="GO:0031471">
    <property type="term" value="C:ethanolamine degradation polyhedral organelle"/>
    <property type="evidence" value="ECO:0007669"/>
    <property type="project" value="UniProtKB-UniRule"/>
</dbReference>
<dbReference type="GO" id="GO:0031419">
    <property type="term" value="F:cobalamin binding"/>
    <property type="evidence" value="ECO:0007669"/>
    <property type="project" value="UniProtKB-UniRule"/>
</dbReference>
<dbReference type="GO" id="GO:0008851">
    <property type="term" value="F:ethanolamine ammonia-lyase activity"/>
    <property type="evidence" value="ECO:0007669"/>
    <property type="project" value="UniProtKB-UniRule"/>
</dbReference>
<dbReference type="GO" id="GO:0006520">
    <property type="term" value="P:amino acid metabolic process"/>
    <property type="evidence" value="ECO:0007669"/>
    <property type="project" value="InterPro"/>
</dbReference>
<dbReference type="GO" id="GO:0046336">
    <property type="term" value="P:ethanolamine catabolic process"/>
    <property type="evidence" value="ECO:0007669"/>
    <property type="project" value="UniProtKB-UniRule"/>
</dbReference>
<dbReference type="FunFam" id="1.10.30.40:FF:000001">
    <property type="entry name" value="Ethanolamine ammonia-lyase light chain"/>
    <property type="match status" value="1"/>
</dbReference>
<dbReference type="FunFam" id="3.40.50.11240:FF:000001">
    <property type="entry name" value="Ethanolamine ammonia-lyase light chain"/>
    <property type="match status" value="1"/>
</dbReference>
<dbReference type="Gene3D" id="3.40.50.11240">
    <property type="entry name" value="Ethanolamine ammonia-lyase light chain (EutC)"/>
    <property type="match status" value="1"/>
</dbReference>
<dbReference type="Gene3D" id="1.10.30.40">
    <property type="entry name" value="Ethanolamine ammonia-lyase light chain (EutC), N-terminal domain"/>
    <property type="match status" value="1"/>
</dbReference>
<dbReference type="HAMAP" id="MF_00601">
    <property type="entry name" value="EutC"/>
    <property type="match status" value="1"/>
</dbReference>
<dbReference type="InterPro" id="IPR009246">
    <property type="entry name" value="EutC"/>
</dbReference>
<dbReference type="InterPro" id="IPR042251">
    <property type="entry name" value="EutC_C"/>
</dbReference>
<dbReference type="InterPro" id="IPR042255">
    <property type="entry name" value="EutC_N"/>
</dbReference>
<dbReference type="NCBIfam" id="NF003971">
    <property type="entry name" value="PRK05465.1"/>
    <property type="match status" value="1"/>
</dbReference>
<dbReference type="PANTHER" id="PTHR39330">
    <property type="entry name" value="ETHANOLAMINE AMMONIA-LYASE LIGHT CHAIN"/>
    <property type="match status" value="1"/>
</dbReference>
<dbReference type="PANTHER" id="PTHR39330:SF1">
    <property type="entry name" value="ETHANOLAMINE AMMONIA-LYASE SMALL SUBUNIT"/>
    <property type="match status" value="1"/>
</dbReference>
<dbReference type="Pfam" id="PF05985">
    <property type="entry name" value="EutC"/>
    <property type="match status" value="1"/>
</dbReference>
<dbReference type="PIRSF" id="PIRSF018982">
    <property type="entry name" value="EutC"/>
    <property type="match status" value="1"/>
</dbReference>
<keyword id="KW-1283">Bacterial microcompartment</keyword>
<keyword id="KW-0846">Cobalamin</keyword>
<keyword id="KW-0170">Cobalt</keyword>
<keyword id="KW-0456">Lyase</keyword>
<keyword id="KW-1185">Reference proteome</keyword>
<comment type="function">
    <text evidence="1">Catalyzes the deamination of various vicinal amino-alcohols to oxo compounds. Allows this organism to utilize ethanolamine as the sole source of nitrogen and carbon in the presence of external vitamin B12.</text>
</comment>
<comment type="catalytic activity">
    <reaction evidence="1">
        <text>ethanolamine = acetaldehyde + NH4(+)</text>
        <dbReference type="Rhea" id="RHEA:15313"/>
        <dbReference type="ChEBI" id="CHEBI:15343"/>
        <dbReference type="ChEBI" id="CHEBI:28938"/>
        <dbReference type="ChEBI" id="CHEBI:57603"/>
        <dbReference type="EC" id="4.3.1.7"/>
    </reaction>
</comment>
<comment type="cofactor">
    <cofactor evidence="1">
        <name>adenosylcob(III)alamin</name>
        <dbReference type="ChEBI" id="CHEBI:18408"/>
    </cofactor>
    <text evidence="1">Binds between the large and small subunits.</text>
</comment>
<comment type="pathway">
    <text evidence="1">Amine and polyamine degradation; ethanolamine degradation.</text>
</comment>
<comment type="subunit">
    <text evidence="1">The basic unit is a heterodimer which dimerizes to form tetramers. The heterotetramers trimerize; 6 large subunits form a core ring with 6 small subunits projecting outwards.</text>
</comment>
<comment type="subcellular location">
    <subcellularLocation>
        <location evidence="1">Bacterial microcompartment</location>
    </subcellularLocation>
</comment>
<comment type="similarity">
    <text evidence="1">Belongs to the EutC family.</text>
</comment>
<sequence>MNEKDLKALVEQLVGQMVGELDTNVVSETVKKATEVVVDNNACIDDITEVDIRKQLLVKNPKDAEAYLDMKAKTPARLGIGRAGTRYKTETVLRFRADHAAAQDAVFSYVDEEFIKENNMFAVETLCKDKDEYLTRPDLGRKFSPETINNIKSKFGTNQKVLILVGDGLSSAAIEANLKDCVPAIKQGLKMYGIDSSEILFVKHCRVGAMDHLGEELGCEVICMLVGERPGLVTAESMSAYIAYKPYIGMAEAKRTVISNIHKGGTTAVEAGAHIAELIKTMLDKKASGIDLK</sequence>
<proteinExistence type="inferred from homology"/>
<evidence type="ECO:0000255" key="1">
    <source>
        <dbReference type="HAMAP-Rule" id="MF_00601"/>
    </source>
</evidence>
<feature type="chain" id="PRO_1000025851" description="Ethanolamine ammonia-lyase small subunit">
    <location>
        <begin position="1"/>
        <end position="293"/>
    </location>
</feature>
<feature type="binding site" evidence="1">
    <location>
        <position position="207"/>
    </location>
    <ligand>
        <name>adenosylcob(III)alamin</name>
        <dbReference type="ChEBI" id="CHEBI:18408"/>
    </ligand>
</feature>
<feature type="binding site" evidence="1">
    <location>
        <position position="228"/>
    </location>
    <ligand>
        <name>adenosylcob(III)alamin</name>
        <dbReference type="ChEBI" id="CHEBI:18408"/>
    </ligand>
</feature>
<name>EUTC_CLOD6</name>
<gene>
    <name evidence="1" type="primary">eutC</name>
    <name type="ordered locus">CD630_19140</name>
</gene>